<evidence type="ECO:0000255" key="1">
    <source>
        <dbReference type="HAMAP-Rule" id="MF_00020"/>
    </source>
</evidence>
<proteinExistence type="inferred from homology"/>
<feature type="chain" id="PRO_0000107629" description="Acetate kinase">
    <location>
        <begin position="1"/>
        <end position="398"/>
    </location>
</feature>
<feature type="active site" description="Proton donor/acceptor" evidence="1">
    <location>
        <position position="147"/>
    </location>
</feature>
<feature type="binding site" evidence="1">
    <location>
        <position position="7"/>
    </location>
    <ligand>
        <name>Mg(2+)</name>
        <dbReference type="ChEBI" id="CHEBI:18420"/>
    </ligand>
</feature>
<feature type="binding site" evidence="1">
    <location>
        <position position="14"/>
    </location>
    <ligand>
        <name>ATP</name>
        <dbReference type="ChEBI" id="CHEBI:30616"/>
    </ligand>
</feature>
<feature type="binding site" evidence="1">
    <location>
        <position position="90"/>
    </location>
    <ligand>
        <name>substrate</name>
    </ligand>
</feature>
<feature type="binding site" evidence="1">
    <location>
        <begin position="207"/>
        <end position="211"/>
    </location>
    <ligand>
        <name>ATP</name>
        <dbReference type="ChEBI" id="CHEBI:30616"/>
    </ligand>
</feature>
<feature type="binding site" evidence="1">
    <location>
        <begin position="282"/>
        <end position="284"/>
    </location>
    <ligand>
        <name>ATP</name>
        <dbReference type="ChEBI" id="CHEBI:30616"/>
    </ligand>
</feature>
<feature type="binding site" evidence="1">
    <location>
        <begin position="330"/>
        <end position="334"/>
    </location>
    <ligand>
        <name>ATP</name>
        <dbReference type="ChEBI" id="CHEBI:30616"/>
    </ligand>
</feature>
<feature type="binding site" evidence="1">
    <location>
        <position position="383"/>
    </location>
    <ligand>
        <name>Mg(2+)</name>
        <dbReference type="ChEBI" id="CHEBI:18420"/>
    </ligand>
</feature>
<feature type="site" description="Transition state stabilizer" evidence="1">
    <location>
        <position position="179"/>
    </location>
</feature>
<feature type="site" description="Transition state stabilizer" evidence="1">
    <location>
        <position position="240"/>
    </location>
</feature>
<protein>
    <recommendedName>
        <fullName evidence="1">Acetate kinase</fullName>
        <ecNumber evidence="1">2.7.2.1</ecNumber>
    </recommendedName>
    <alternativeName>
        <fullName evidence="1">Acetokinase</fullName>
    </alternativeName>
</protein>
<sequence>MKILVLNCGSSSIKYQLLDMETESVLAIGKVERVGMEDAIFEYKGAGEKIKEIGTILDHTAGVRKVLKALTDPVHGVIQAPEEIAAVGHRVVHGGEAFVKSVIITDEVKRTLRELFDLAPLHNPANLTGILAAEAALPHAPGVAVFDTAFHATMPRKAFLYALPYAMYKGHKVRRYGFHGTSHKYVSQRAADLLGRPLEEVNLITCHLGNGSSVTAVQGGKSVDTSMGFTPLAGLIMGTRAGDLDPGVIPYIMAREEIGISEVNSMLNKHSGILGISGISSDMRQIEEEMEKGDPRAVETFEMMEYRLRKYIGAYAAVLGRVDGIVFTGGIGENSPLFRKAVCQNLGFLGVTFDEEANNCRGQERIISGPDSKVAVMVIPTNEELMIARETAELIRNR</sequence>
<gene>
    <name evidence="1" type="primary">ackA</name>
    <name type="ordered locus">STH2585</name>
</gene>
<reference key="1">
    <citation type="journal article" date="2004" name="Nucleic Acids Res.">
        <title>Genome sequence of Symbiobacterium thermophilum, an uncultivable bacterium that depends on microbial commensalism.</title>
        <authorList>
            <person name="Ueda K."/>
            <person name="Yamashita A."/>
            <person name="Ishikawa J."/>
            <person name="Shimada M."/>
            <person name="Watsuji T."/>
            <person name="Morimura K."/>
            <person name="Ikeda H."/>
            <person name="Hattori M."/>
            <person name="Beppu T."/>
        </authorList>
    </citation>
    <scope>NUCLEOTIDE SEQUENCE [LARGE SCALE GENOMIC DNA]</scope>
    <source>
        <strain>DSM 24528 / JCM 14929 / IAM 14863 / T</strain>
    </source>
</reference>
<accession>Q67L76</accession>
<keyword id="KW-0067">ATP-binding</keyword>
<keyword id="KW-0963">Cytoplasm</keyword>
<keyword id="KW-0418">Kinase</keyword>
<keyword id="KW-0460">Magnesium</keyword>
<keyword id="KW-0479">Metal-binding</keyword>
<keyword id="KW-0547">Nucleotide-binding</keyword>
<keyword id="KW-1185">Reference proteome</keyword>
<keyword id="KW-0808">Transferase</keyword>
<name>ACKA_SYMTH</name>
<organism>
    <name type="scientific">Symbiobacterium thermophilum (strain DSM 24528 / JCM 14929 / IAM 14863 / T)</name>
    <dbReference type="NCBI Taxonomy" id="292459"/>
    <lineage>
        <taxon>Bacteria</taxon>
        <taxon>Bacillati</taxon>
        <taxon>Bacillota</taxon>
        <taxon>Clostridia</taxon>
        <taxon>Eubacteriales</taxon>
        <taxon>Symbiobacteriaceae</taxon>
        <taxon>Symbiobacterium</taxon>
    </lineage>
</organism>
<comment type="function">
    <text evidence="1">Catalyzes the formation of acetyl phosphate from acetate and ATP. Can also catalyze the reverse reaction.</text>
</comment>
<comment type="catalytic activity">
    <reaction evidence="1">
        <text>acetate + ATP = acetyl phosphate + ADP</text>
        <dbReference type="Rhea" id="RHEA:11352"/>
        <dbReference type="ChEBI" id="CHEBI:22191"/>
        <dbReference type="ChEBI" id="CHEBI:30089"/>
        <dbReference type="ChEBI" id="CHEBI:30616"/>
        <dbReference type="ChEBI" id="CHEBI:456216"/>
        <dbReference type="EC" id="2.7.2.1"/>
    </reaction>
</comment>
<comment type="cofactor">
    <cofactor evidence="1">
        <name>Mg(2+)</name>
        <dbReference type="ChEBI" id="CHEBI:18420"/>
    </cofactor>
    <cofactor evidence="1">
        <name>Mn(2+)</name>
        <dbReference type="ChEBI" id="CHEBI:29035"/>
    </cofactor>
    <text evidence="1">Mg(2+). Can also accept Mn(2+).</text>
</comment>
<comment type="pathway">
    <text evidence="1">Metabolic intermediate biosynthesis; acetyl-CoA biosynthesis; acetyl-CoA from acetate: step 1/2.</text>
</comment>
<comment type="subunit">
    <text evidence="1">Homodimer.</text>
</comment>
<comment type="subcellular location">
    <subcellularLocation>
        <location evidence="1">Cytoplasm</location>
    </subcellularLocation>
</comment>
<comment type="similarity">
    <text evidence="1">Belongs to the acetokinase family.</text>
</comment>
<dbReference type="EC" id="2.7.2.1" evidence="1"/>
<dbReference type="EMBL" id="AP006840">
    <property type="protein sequence ID" value="BAD41570.1"/>
    <property type="molecule type" value="Genomic_DNA"/>
</dbReference>
<dbReference type="RefSeq" id="WP_011196707.1">
    <property type="nucleotide sequence ID" value="NC_006177.1"/>
</dbReference>
<dbReference type="SMR" id="Q67L76"/>
<dbReference type="STRING" id="292459.STH2585"/>
<dbReference type="KEGG" id="sth:STH2585"/>
<dbReference type="eggNOG" id="COG0282">
    <property type="taxonomic scope" value="Bacteria"/>
</dbReference>
<dbReference type="HOGENOM" id="CLU_020352_0_1_9"/>
<dbReference type="OrthoDB" id="9802453at2"/>
<dbReference type="UniPathway" id="UPA00340">
    <property type="reaction ID" value="UER00458"/>
</dbReference>
<dbReference type="Proteomes" id="UP000000417">
    <property type="component" value="Chromosome"/>
</dbReference>
<dbReference type="GO" id="GO:0005737">
    <property type="term" value="C:cytoplasm"/>
    <property type="evidence" value="ECO:0007669"/>
    <property type="project" value="UniProtKB-SubCell"/>
</dbReference>
<dbReference type="GO" id="GO:0008776">
    <property type="term" value="F:acetate kinase activity"/>
    <property type="evidence" value="ECO:0007669"/>
    <property type="project" value="UniProtKB-UniRule"/>
</dbReference>
<dbReference type="GO" id="GO:0005524">
    <property type="term" value="F:ATP binding"/>
    <property type="evidence" value="ECO:0007669"/>
    <property type="project" value="UniProtKB-KW"/>
</dbReference>
<dbReference type="GO" id="GO:0000287">
    <property type="term" value="F:magnesium ion binding"/>
    <property type="evidence" value="ECO:0007669"/>
    <property type="project" value="UniProtKB-UniRule"/>
</dbReference>
<dbReference type="GO" id="GO:0006083">
    <property type="term" value="P:acetate metabolic process"/>
    <property type="evidence" value="ECO:0007669"/>
    <property type="project" value="TreeGrafter"/>
</dbReference>
<dbReference type="GO" id="GO:0006085">
    <property type="term" value="P:acetyl-CoA biosynthetic process"/>
    <property type="evidence" value="ECO:0007669"/>
    <property type="project" value="UniProtKB-UniRule"/>
</dbReference>
<dbReference type="CDD" id="cd24010">
    <property type="entry name" value="ASKHA_NBD_AcK_PK"/>
    <property type="match status" value="1"/>
</dbReference>
<dbReference type="Gene3D" id="3.30.420.40">
    <property type="match status" value="2"/>
</dbReference>
<dbReference type="HAMAP" id="MF_00020">
    <property type="entry name" value="Acetate_kinase"/>
    <property type="match status" value="1"/>
</dbReference>
<dbReference type="InterPro" id="IPR004372">
    <property type="entry name" value="Ac/propionate_kinase"/>
</dbReference>
<dbReference type="InterPro" id="IPR000890">
    <property type="entry name" value="Aliphatic_acid_kin_short-chain"/>
</dbReference>
<dbReference type="InterPro" id="IPR023865">
    <property type="entry name" value="Aliphatic_acid_kinase_CS"/>
</dbReference>
<dbReference type="InterPro" id="IPR043129">
    <property type="entry name" value="ATPase_NBD"/>
</dbReference>
<dbReference type="NCBIfam" id="TIGR00016">
    <property type="entry name" value="ackA"/>
    <property type="match status" value="1"/>
</dbReference>
<dbReference type="PANTHER" id="PTHR21060">
    <property type="entry name" value="ACETATE KINASE"/>
    <property type="match status" value="1"/>
</dbReference>
<dbReference type="PANTHER" id="PTHR21060:SF15">
    <property type="entry name" value="ACETATE KINASE-RELATED"/>
    <property type="match status" value="1"/>
</dbReference>
<dbReference type="Pfam" id="PF00871">
    <property type="entry name" value="Acetate_kinase"/>
    <property type="match status" value="1"/>
</dbReference>
<dbReference type="PIRSF" id="PIRSF000722">
    <property type="entry name" value="Acetate_prop_kin"/>
    <property type="match status" value="1"/>
</dbReference>
<dbReference type="PRINTS" id="PR00471">
    <property type="entry name" value="ACETATEKNASE"/>
</dbReference>
<dbReference type="SUPFAM" id="SSF53067">
    <property type="entry name" value="Actin-like ATPase domain"/>
    <property type="match status" value="2"/>
</dbReference>
<dbReference type="PROSITE" id="PS01075">
    <property type="entry name" value="ACETATE_KINASE_1"/>
    <property type="match status" value="1"/>
</dbReference>
<dbReference type="PROSITE" id="PS01076">
    <property type="entry name" value="ACETATE_KINASE_2"/>
    <property type="match status" value="1"/>
</dbReference>